<keyword id="KW-0066">ATP synthesis</keyword>
<keyword id="KW-1003">Cell membrane</keyword>
<keyword id="KW-0139">CF(1)</keyword>
<keyword id="KW-0375">Hydrogen ion transport</keyword>
<keyword id="KW-0406">Ion transport</keyword>
<keyword id="KW-0472">Membrane</keyword>
<keyword id="KW-0813">Transport</keyword>
<name>ATPE_STAAR</name>
<comment type="function">
    <text evidence="1">Produces ATP from ADP in the presence of a proton gradient across the membrane.</text>
</comment>
<comment type="subunit">
    <text>F-type ATPases have 2 components, CF(1) - the catalytic core - and CF(0) - the membrane proton channel. CF(1) has five subunits: alpha(3), beta(3), gamma(1), delta(1), epsilon(1). CF(0) has three main subunits: a, b and c.</text>
</comment>
<comment type="subcellular location">
    <subcellularLocation>
        <location evidence="1">Cell membrane</location>
        <topology evidence="1">Peripheral membrane protein</topology>
    </subcellularLocation>
</comment>
<comment type="similarity">
    <text evidence="1">Belongs to the ATPase epsilon chain family.</text>
</comment>
<protein>
    <recommendedName>
        <fullName evidence="1">ATP synthase epsilon chain</fullName>
    </recommendedName>
    <alternativeName>
        <fullName evidence="1">ATP synthase F1 sector epsilon subunit</fullName>
    </alternativeName>
    <alternativeName>
        <fullName evidence="1">F-ATPase epsilon subunit</fullName>
    </alternativeName>
</protein>
<proteinExistence type="inferred from homology"/>
<dbReference type="EMBL" id="BX571856">
    <property type="protein sequence ID" value="CAG41171.1"/>
    <property type="molecule type" value="Genomic_DNA"/>
</dbReference>
<dbReference type="RefSeq" id="WP_001094394.1">
    <property type="nucleotide sequence ID" value="NC_002952.2"/>
</dbReference>
<dbReference type="SMR" id="Q6GEX3"/>
<dbReference type="KEGG" id="sar:SAR2190"/>
<dbReference type="HOGENOM" id="CLU_084338_1_3_9"/>
<dbReference type="Proteomes" id="UP000000596">
    <property type="component" value="Chromosome"/>
</dbReference>
<dbReference type="GO" id="GO:0005886">
    <property type="term" value="C:plasma membrane"/>
    <property type="evidence" value="ECO:0007669"/>
    <property type="project" value="UniProtKB-SubCell"/>
</dbReference>
<dbReference type="GO" id="GO:0045259">
    <property type="term" value="C:proton-transporting ATP synthase complex"/>
    <property type="evidence" value="ECO:0007669"/>
    <property type="project" value="UniProtKB-KW"/>
</dbReference>
<dbReference type="GO" id="GO:0005524">
    <property type="term" value="F:ATP binding"/>
    <property type="evidence" value="ECO:0007669"/>
    <property type="project" value="UniProtKB-UniRule"/>
</dbReference>
<dbReference type="GO" id="GO:0046933">
    <property type="term" value="F:proton-transporting ATP synthase activity, rotational mechanism"/>
    <property type="evidence" value="ECO:0007669"/>
    <property type="project" value="UniProtKB-UniRule"/>
</dbReference>
<dbReference type="CDD" id="cd12152">
    <property type="entry name" value="F1-ATPase_delta"/>
    <property type="match status" value="1"/>
</dbReference>
<dbReference type="FunFam" id="1.20.5.440:FF:000001">
    <property type="entry name" value="ATP synthase epsilon chain"/>
    <property type="match status" value="1"/>
</dbReference>
<dbReference type="FunFam" id="2.60.15.10:FF:000001">
    <property type="entry name" value="ATP synthase epsilon chain"/>
    <property type="match status" value="1"/>
</dbReference>
<dbReference type="Gene3D" id="1.20.5.440">
    <property type="entry name" value="ATP synthase delta/epsilon subunit, C-terminal domain"/>
    <property type="match status" value="1"/>
</dbReference>
<dbReference type="Gene3D" id="2.60.15.10">
    <property type="entry name" value="F0F1 ATP synthase delta/epsilon subunit, N-terminal"/>
    <property type="match status" value="1"/>
</dbReference>
<dbReference type="HAMAP" id="MF_00530">
    <property type="entry name" value="ATP_synth_epsil_bac"/>
    <property type="match status" value="1"/>
</dbReference>
<dbReference type="InterPro" id="IPR036794">
    <property type="entry name" value="ATP_F1_dsu/esu_C_sf"/>
</dbReference>
<dbReference type="InterPro" id="IPR001469">
    <property type="entry name" value="ATP_synth_F1_dsu/esu"/>
</dbReference>
<dbReference type="InterPro" id="IPR020546">
    <property type="entry name" value="ATP_synth_F1_dsu/esu_N"/>
</dbReference>
<dbReference type="InterPro" id="IPR020547">
    <property type="entry name" value="ATP_synth_F1_esu_C"/>
</dbReference>
<dbReference type="InterPro" id="IPR036771">
    <property type="entry name" value="ATPsynth_dsu/esu_N"/>
</dbReference>
<dbReference type="NCBIfam" id="TIGR01216">
    <property type="entry name" value="ATP_synt_epsi"/>
    <property type="match status" value="1"/>
</dbReference>
<dbReference type="NCBIfam" id="NF001846">
    <property type="entry name" value="PRK00571.1-3"/>
    <property type="match status" value="1"/>
</dbReference>
<dbReference type="NCBIfam" id="NF009980">
    <property type="entry name" value="PRK13446.1"/>
    <property type="match status" value="1"/>
</dbReference>
<dbReference type="PANTHER" id="PTHR13822">
    <property type="entry name" value="ATP SYNTHASE DELTA/EPSILON CHAIN"/>
    <property type="match status" value="1"/>
</dbReference>
<dbReference type="PANTHER" id="PTHR13822:SF10">
    <property type="entry name" value="ATP SYNTHASE EPSILON CHAIN, CHLOROPLASTIC"/>
    <property type="match status" value="1"/>
</dbReference>
<dbReference type="Pfam" id="PF00401">
    <property type="entry name" value="ATP-synt_DE"/>
    <property type="match status" value="1"/>
</dbReference>
<dbReference type="Pfam" id="PF02823">
    <property type="entry name" value="ATP-synt_DE_N"/>
    <property type="match status" value="1"/>
</dbReference>
<dbReference type="SUPFAM" id="SSF46604">
    <property type="entry name" value="Epsilon subunit of F1F0-ATP synthase C-terminal domain"/>
    <property type="match status" value="1"/>
</dbReference>
<dbReference type="SUPFAM" id="SSF51344">
    <property type="entry name" value="Epsilon subunit of F1F0-ATP synthase N-terminal domain"/>
    <property type="match status" value="1"/>
</dbReference>
<accession>Q6GEX3</accession>
<sequence length="134" mass="14844">MNTLNLDIVTPNGSVYNRDNVELVVMQTTAGEIGVMSGHIPTVAALKTGFVKVKFHDGTEYIAVSDGFVEVRKDKVSIIVQTAETAREIDVERAKLAKARAESHLENDDDNTDIHRAERALERANNRLRVAELK</sequence>
<gene>
    <name evidence="1" type="primary">atpC</name>
    <name type="ordered locus">SAR2190</name>
</gene>
<organism>
    <name type="scientific">Staphylococcus aureus (strain MRSA252)</name>
    <dbReference type="NCBI Taxonomy" id="282458"/>
    <lineage>
        <taxon>Bacteria</taxon>
        <taxon>Bacillati</taxon>
        <taxon>Bacillota</taxon>
        <taxon>Bacilli</taxon>
        <taxon>Bacillales</taxon>
        <taxon>Staphylococcaceae</taxon>
        <taxon>Staphylococcus</taxon>
    </lineage>
</organism>
<reference key="1">
    <citation type="journal article" date="2004" name="Proc. Natl. Acad. Sci. U.S.A.">
        <title>Complete genomes of two clinical Staphylococcus aureus strains: evidence for the rapid evolution of virulence and drug resistance.</title>
        <authorList>
            <person name="Holden M.T.G."/>
            <person name="Feil E.J."/>
            <person name="Lindsay J.A."/>
            <person name="Peacock S.J."/>
            <person name="Day N.P.J."/>
            <person name="Enright M.C."/>
            <person name="Foster T.J."/>
            <person name="Moore C.E."/>
            <person name="Hurst L."/>
            <person name="Atkin R."/>
            <person name="Barron A."/>
            <person name="Bason N."/>
            <person name="Bentley S.D."/>
            <person name="Chillingworth C."/>
            <person name="Chillingworth T."/>
            <person name="Churcher C."/>
            <person name="Clark L."/>
            <person name="Corton C."/>
            <person name="Cronin A."/>
            <person name="Doggett J."/>
            <person name="Dowd L."/>
            <person name="Feltwell T."/>
            <person name="Hance Z."/>
            <person name="Harris B."/>
            <person name="Hauser H."/>
            <person name="Holroyd S."/>
            <person name="Jagels K."/>
            <person name="James K.D."/>
            <person name="Lennard N."/>
            <person name="Line A."/>
            <person name="Mayes R."/>
            <person name="Moule S."/>
            <person name="Mungall K."/>
            <person name="Ormond D."/>
            <person name="Quail M.A."/>
            <person name="Rabbinowitsch E."/>
            <person name="Rutherford K.M."/>
            <person name="Sanders M."/>
            <person name="Sharp S."/>
            <person name="Simmonds M."/>
            <person name="Stevens K."/>
            <person name="Whitehead S."/>
            <person name="Barrell B.G."/>
            <person name="Spratt B.G."/>
            <person name="Parkhill J."/>
        </authorList>
    </citation>
    <scope>NUCLEOTIDE SEQUENCE [LARGE SCALE GENOMIC DNA]</scope>
    <source>
        <strain>MRSA252</strain>
    </source>
</reference>
<feature type="chain" id="PRO_0000188203" description="ATP synthase epsilon chain">
    <location>
        <begin position="1"/>
        <end position="134"/>
    </location>
</feature>
<evidence type="ECO:0000255" key="1">
    <source>
        <dbReference type="HAMAP-Rule" id="MF_00530"/>
    </source>
</evidence>